<sequence length="239" mass="26099">MNKNIVIKSMAALAILTSVTGINAAVVEETQQIANAEKNVTQVKDTNNFPYNGVVSFKDATGFVIGKNTIITNKHVSKDYKVGDRITAHPNGDKGNGGIYKIKSISDYPGDEDISVMNIEEQAVERGPKGFNFNENVQAFNFAKDAKVDDKIKVIGYPLPAQNSFKQFESTGTIKRIKDNILNFDAYIEPGNSGSPVLNSNNEVIGVVYGGIGKIGSEYNGAVYFTPQIKDFIQKHIEQ</sequence>
<gene>
    <name type="primary">splC</name>
    <name type="ordered locus">SaurJH1_1897</name>
</gene>
<accession>A6U2R7</accession>
<feature type="signal peptide" evidence="1">
    <location>
        <begin position="1"/>
        <end position="36"/>
    </location>
</feature>
<feature type="chain" id="PRO_5000257050" description="Serine protease SplC">
    <location>
        <begin position="37"/>
        <end position="239"/>
    </location>
</feature>
<feature type="active site" description="Charge relay system" evidence="1">
    <location>
        <position position="75"/>
    </location>
</feature>
<feature type="active site" description="Charge relay system" evidence="1">
    <location>
        <position position="113"/>
    </location>
</feature>
<feature type="active site" description="Charge relay system" evidence="1">
    <location>
        <position position="193"/>
    </location>
</feature>
<evidence type="ECO:0000250" key="1"/>
<evidence type="ECO:0000305" key="2"/>
<dbReference type="EC" id="3.4.21.-"/>
<dbReference type="EMBL" id="CP000736">
    <property type="protein sequence ID" value="ABR52735.1"/>
    <property type="molecule type" value="Genomic_DNA"/>
</dbReference>
<dbReference type="SMR" id="A6U2R7"/>
<dbReference type="MEROPS" id="S01.283"/>
<dbReference type="KEGG" id="sah:SaurJH1_1897"/>
<dbReference type="HOGENOM" id="CLU_073589_2_0_9"/>
<dbReference type="GO" id="GO:0005576">
    <property type="term" value="C:extracellular region"/>
    <property type="evidence" value="ECO:0007669"/>
    <property type="project" value="UniProtKB-SubCell"/>
</dbReference>
<dbReference type="GO" id="GO:0004252">
    <property type="term" value="F:serine-type endopeptidase activity"/>
    <property type="evidence" value="ECO:0007669"/>
    <property type="project" value="InterPro"/>
</dbReference>
<dbReference type="GO" id="GO:0006508">
    <property type="term" value="P:proteolysis"/>
    <property type="evidence" value="ECO:0007669"/>
    <property type="project" value="UniProtKB-KW"/>
</dbReference>
<dbReference type="Gene3D" id="2.40.10.10">
    <property type="entry name" value="Trypsin-like serine proteases"/>
    <property type="match status" value="2"/>
</dbReference>
<dbReference type="InterPro" id="IPR009003">
    <property type="entry name" value="Peptidase_S1_PA"/>
</dbReference>
<dbReference type="InterPro" id="IPR043504">
    <property type="entry name" value="Peptidase_S1_PA_chymotrypsin"/>
</dbReference>
<dbReference type="InterPro" id="IPR008256">
    <property type="entry name" value="Peptidase_S1B"/>
</dbReference>
<dbReference type="InterPro" id="IPR008353">
    <property type="entry name" value="Peptidase_S1B_tx"/>
</dbReference>
<dbReference type="InterPro" id="IPR001254">
    <property type="entry name" value="Trypsin_dom"/>
</dbReference>
<dbReference type="InterPro" id="IPR028301">
    <property type="entry name" value="V8_his_AS"/>
</dbReference>
<dbReference type="PANTHER" id="PTHR43019:SF23">
    <property type="entry name" value="PROTEASE DO-LIKE 5, CHLOROPLASTIC"/>
    <property type="match status" value="1"/>
</dbReference>
<dbReference type="PANTHER" id="PTHR43019">
    <property type="entry name" value="SERINE ENDOPROTEASE DEGS"/>
    <property type="match status" value="1"/>
</dbReference>
<dbReference type="Pfam" id="PF00089">
    <property type="entry name" value="Trypsin"/>
    <property type="match status" value="1"/>
</dbReference>
<dbReference type="PRINTS" id="PR01774">
    <property type="entry name" value="EXFOLTOXIN"/>
</dbReference>
<dbReference type="PRINTS" id="PR00839">
    <property type="entry name" value="V8PROTEASE"/>
</dbReference>
<dbReference type="SUPFAM" id="SSF50494">
    <property type="entry name" value="Trypsin-like serine proteases"/>
    <property type="match status" value="1"/>
</dbReference>
<dbReference type="PROSITE" id="PS00672">
    <property type="entry name" value="V8_HIS"/>
    <property type="match status" value="1"/>
</dbReference>
<comment type="subcellular location">
    <subcellularLocation>
        <location evidence="1">Secreted</location>
    </subcellularLocation>
</comment>
<comment type="similarity">
    <text evidence="2">Belongs to the peptidase S1B family.</text>
</comment>
<keyword id="KW-0378">Hydrolase</keyword>
<keyword id="KW-0645">Protease</keyword>
<keyword id="KW-0964">Secreted</keyword>
<keyword id="KW-0720">Serine protease</keyword>
<keyword id="KW-0732">Signal</keyword>
<proteinExistence type="inferred from homology"/>
<name>SPLC_STAA2</name>
<organism>
    <name type="scientific">Staphylococcus aureus (strain JH1)</name>
    <dbReference type="NCBI Taxonomy" id="359787"/>
    <lineage>
        <taxon>Bacteria</taxon>
        <taxon>Bacillati</taxon>
        <taxon>Bacillota</taxon>
        <taxon>Bacilli</taxon>
        <taxon>Bacillales</taxon>
        <taxon>Staphylococcaceae</taxon>
        <taxon>Staphylococcus</taxon>
    </lineage>
</organism>
<reference key="1">
    <citation type="submission" date="2007-06" db="EMBL/GenBank/DDBJ databases">
        <title>Complete sequence of chromosome of Staphylococcus aureus subsp. aureus JH1.</title>
        <authorList>
            <consortium name="US DOE Joint Genome Institute"/>
            <person name="Copeland A."/>
            <person name="Lucas S."/>
            <person name="Lapidus A."/>
            <person name="Barry K."/>
            <person name="Detter J.C."/>
            <person name="Glavina del Rio T."/>
            <person name="Hammon N."/>
            <person name="Israni S."/>
            <person name="Dalin E."/>
            <person name="Tice H."/>
            <person name="Pitluck S."/>
            <person name="Chain P."/>
            <person name="Malfatti S."/>
            <person name="Shin M."/>
            <person name="Vergez L."/>
            <person name="Schmutz J."/>
            <person name="Larimer F."/>
            <person name="Land M."/>
            <person name="Hauser L."/>
            <person name="Kyrpides N."/>
            <person name="Ivanova N."/>
            <person name="Tomasz A."/>
            <person name="Richardson P."/>
        </authorList>
    </citation>
    <scope>NUCLEOTIDE SEQUENCE [LARGE SCALE GENOMIC DNA]</scope>
    <source>
        <strain>JH1</strain>
    </source>
</reference>
<protein>
    <recommendedName>
        <fullName>Serine protease SplC</fullName>
        <ecNumber>3.4.21.-</ecNumber>
    </recommendedName>
</protein>